<protein>
    <recommendedName>
        <fullName evidence="1">Tetraacyldisaccharide 4'-kinase</fullName>
        <ecNumber evidence="1">2.7.1.130</ecNumber>
    </recommendedName>
    <alternativeName>
        <fullName evidence="1">Lipid A 4'-kinase</fullName>
    </alternativeName>
</protein>
<sequence>MRAPDFWWRDPPSLPARLLAPVGALYGAAAARRMARPGAPAPCPVVCVGNVTLGGAGKTPTALALAALLRELGARPAFLSRGYGGSLPGPLRVDPAAHGAAEVGDEPLLIARAAPTIVARDRPAGAAACAAAGADVIVMDDGLQNPSLRKDWSLAVFDAGVGIGNGLPFPAGPLRAPLGAQWPLVSAVLVIGDAAQGRPLLAAAAARGLPALRGRLAPDAAAAAALRGRPVLAFAGIGRPDKFFESLRAVGAELRGTRAFPDHHAYRAGEIAALEREATRRGLTLVTTEKDRVRLPAAMAVAVLPVRLALAPDDAALLRARLAALLRGRAGP</sequence>
<reference key="1">
    <citation type="submission" date="2008-02" db="EMBL/GenBank/DDBJ databases">
        <title>Complete sequence of chromosome of Methylobacterium sp. 4-46.</title>
        <authorList>
            <consortium name="US DOE Joint Genome Institute"/>
            <person name="Copeland A."/>
            <person name="Lucas S."/>
            <person name="Lapidus A."/>
            <person name="Glavina del Rio T."/>
            <person name="Dalin E."/>
            <person name="Tice H."/>
            <person name="Bruce D."/>
            <person name="Goodwin L."/>
            <person name="Pitluck S."/>
            <person name="Chertkov O."/>
            <person name="Brettin T."/>
            <person name="Detter J.C."/>
            <person name="Han C."/>
            <person name="Kuske C.R."/>
            <person name="Schmutz J."/>
            <person name="Larimer F."/>
            <person name="Land M."/>
            <person name="Hauser L."/>
            <person name="Kyrpides N."/>
            <person name="Ivanova N."/>
            <person name="Marx C.J."/>
            <person name="Richardson P."/>
        </authorList>
    </citation>
    <scope>NUCLEOTIDE SEQUENCE [LARGE SCALE GENOMIC DNA]</scope>
    <source>
        <strain>4-46</strain>
    </source>
</reference>
<proteinExistence type="inferred from homology"/>
<keyword id="KW-0067">ATP-binding</keyword>
<keyword id="KW-0418">Kinase</keyword>
<keyword id="KW-0441">Lipid A biosynthesis</keyword>
<keyword id="KW-0444">Lipid biosynthesis</keyword>
<keyword id="KW-0443">Lipid metabolism</keyword>
<keyword id="KW-0547">Nucleotide-binding</keyword>
<keyword id="KW-0808">Transferase</keyword>
<gene>
    <name evidence="1" type="primary">lpxK</name>
    <name type="ordered locus">M446_6829</name>
</gene>
<evidence type="ECO:0000255" key="1">
    <source>
        <dbReference type="HAMAP-Rule" id="MF_00409"/>
    </source>
</evidence>
<name>LPXK_METS4</name>
<comment type="function">
    <text evidence="1">Transfers the gamma-phosphate of ATP to the 4'-position of a tetraacyldisaccharide 1-phosphate intermediate (termed DS-1-P) to form tetraacyldisaccharide 1,4'-bis-phosphate (lipid IVA).</text>
</comment>
<comment type="catalytic activity">
    <reaction evidence="1">
        <text>a lipid A disaccharide + ATP = a lipid IVA + ADP + H(+)</text>
        <dbReference type="Rhea" id="RHEA:67840"/>
        <dbReference type="ChEBI" id="CHEBI:15378"/>
        <dbReference type="ChEBI" id="CHEBI:30616"/>
        <dbReference type="ChEBI" id="CHEBI:176343"/>
        <dbReference type="ChEBI" id="CHEBI:176425"/>
        <dbReference type="ChEBI" id="CHEBI:456216"/>
        <dbReference type="EC" id="2.7.1.130"/>
    </reaction>
</comment>
<comment type="pathway">
    <text evidence="1">Glycolipid biosynthesis; lipid IV(A) biosynthesis; lipid IV(A) from (3R)-3-hydroxytetradecanoyl-[acyl-carrier-protein] and UDP-N-acetyl-alpha-D-glucosamine: step 6/6.</text>
</comment>
<comment type="similarity">
    <text evidence="1">Belongs to the LpxK family.</text>
</comment>
<organism>
    <name type="scientific">Methylobacterium sp. (strain 4-46)</name>
    <dbReference type="NCBI Taxonomy" id="426117"/>
    <lineage>
        <taxon>Bacteria</taxon>
        <taxon>Pseudomonadati</taxon>
        <taxon>Pseudomonadota</taxon>
        <taxon>Alphaproteobacteria</taxon>
        <taxon>Hyphomicrobiales</taxon>
        <taxon>Methylobacteriaceae</taxon>
        <taxon>Methylobacterium</taxon>
    </lineage>
</organism>
<feature type="chain" id="PRO_1000134748" description="Tetraacyldisaccharide 4'-kinase">
    <location>
        <begin position="1"/>
        <end position="332"/>
    </location>
</feature>
<feature type="binding site" evidence="1">
    <location>
        <begin position="52"/>
        <end position="59"/>
    </location>
    <ligand>
        <name>ATP</name>
        <dbReference type="ChEBI" id="CHEBI:30616"/>
    </ligand>
</feature>
<accession>B0UJ62</accession>
<dbReference type="EC" id="2.7.1.130" evidence="1"/>
<dbReference type="EMBL" id="CP000943">
    <property type="protein sequence ID" value="ACA21074.1"/>
    <property type="molecule type" value="Genomic_DNA"/>
</dbReference>
<dbReference type="RefSeq" id="WP_012336448.1">
    <property type="nucleotide sequence ID" value="NC_010511.1"/>
</dbReference>
<dbReference type="SMR" id="B0UJ62"/>
<dbReference type="STRING" id="426117.M446_6829"/>
<dbReference type="KEGG" id="met:M446_6829"/>
<dbReference type="eggNOG" id="COG1663">
    <property type="taxonomic scope" value="Bacteria"/>
</dbReference>
<dbReference type="HOGENOM" id="CLU_038816_0_0_5"/>
<dbReference type="UniPathway" id="UPA00359">
    <property type="reaction ID" value="UER00482"/>
</dbReference>
<dbReference type="GO" id="GO:0005886">
    <property type="term" value="C:plasma membrane"/>
    <property type="evidence" value="ECO:0007669"/>
    <property type="project" value="TreeGrafter"/>
</dbReference>
<dbReference type="GO" id="GO:0005524">
    <property type="term" value="F:ATP binding"/>
    <property type="evidence" value="ECO:0007669"/>
    <property type="project" value="UniProtKB-UniRule"/>
</dbReference>
<dbReference type="GO" id="GO:0009029">
    <property type="term" value="F:tetraacyldisaccharide 4'-kinase activity"/>
    <property type="evidence" value="ECO:0007669"/>
    <property type="project" value="UniProtKB-UniRule"/>
</dbReference>
<dbReference type="GO" id="GO:0009245">
    <property type="term" value="P:lipid A biosynthetic process"/>
    <property type="evidence" value="ECO:0007669"/>
    <property type="project" value="UniProtKB-UniRule"/>
</dbReference>
<dbReference type="GO" id="GO:0009244">
    <property type="term" value="P:lipopolysaccharide core region biosynthetic process"/>
    <property type="evidence" value="ECO:0007669"/>
    <property type="project" value="TreeGrafter"/>
</dbReference>
<dbReference type="HAMAP" id="MF_00409">
    <property type="entry name" value="LpxK"/>
    <property type="match status" value="1"/>
</dbReference>
<dbReference type="InterPro" id="IPR003758">
    <property type="entry name" value="LpxK"/>
</dbReference>
<dbReference type="InterPro" id="IPR027417">
    <property type="entry name" value="P-loop_NTPase"/>
</dbReference>
<dbReference type="NCBIfam" id="TIGR00682">
    <property type="entry name" value="lpxK"/>
    <property type="match status" value="1"/>
</dbReference>
<dbReference type="PANTHER" id="PTHR42724">
    <property type="entry name" value="TETRAACYLDISACCHARIDE 4'-KINASE"/>
    <property type="match status" value="1"/>
</dbReference>
<dbReference type="PANTHER" id="PTHR42724:SF1">
    <property type="entry name" value="TETRAACYLDISACCHARIDE 4'-KINASE, MITOCHONDRIAL-RELATED"/>
    <property type="match status" value="1"/>
</dbReference>
<dbReference type="Pfam" id="PF02606">
    <property type="entry name" value="LpxK"/>
    <property type="match status" value="1"/>
</dbReference>
<dbReference type="SUPFAM" id="SSF52540">
    <property type="entry name" value="P-loop containing nucleoside triphosphate hydrolases"/>
    <property type="match status" value="1"/>
</dbReference>